<reference key="1">
    <citation type="journal article" date="2009" name="J. Bacteriol.">
        <title>The genome of Burkholderia cenocepacia J2315, an epidemic pathogen of cystic fibrosis patients.</title>
        <authorList>
            <person name="Holden M.T."/>
            <person name="Seth-Smith H.M."/>
            <person name="Crossman L.C."/>
            <person name="Sebaihia M."/>
            <person name="Bentley S.D."/>
            <person name="Cerdeno-Tarraga A.M."/>
            <person name="Thomson N.R."/>
            <person name="Bason N."/>
            <person name="Quail M.A."/>
            <person name="Sharp S."/>
            <person name="Cherevach I."/>
            <person name="Churcher C."/>
            <person name="Goodhead I."/>
            <person name="Hauser H."/>
            <person name="Holroyd N."/>
            <person name="Mungall K."/>
            <person name="Scott P."/>
            <person name="Walker D."/>
            <person name="White B."/>
            <person name="Rose H."/>
            <person name="Iversen P."/>
            <person name="Mil-Homens D."/>
            <person name="Rocha E.P."/>
            <person name="Fialho A.M."/>
            <person name="Baldwin A."/>
            <person name="Dowson C."/>
            <person name="Barrell B.G."/>
            <person name="Govan J.R."/>
            <person name="Vandamme P."/>
            <person name="Hart C.A."/>
            <person name="Mahenthiralingam E."/>
            <person name="Parkhill J."/>
        </authorList>
    </citation>
    <scope>NUCLEOTIDE SEQUENCE [LARGE SCALE GENOMIC DNA]</scope>
    <source>
        <strain>ATCC BAA-245 / DSM 16553 / LMG 16656 / NCTC 13227 / J2315 / CF5610</strain>
    </source>
</reference>
<name>HEM1_BURCJ</name>
<sequence length="432" mass="47505">MQLLTIGINHHTAPVALRERVAFPLEQIKPALVTFKNVFLGPQAPNTPEAAILSTCNRTELYCATDDRAAREGALRWLSEYHRIPVDELAPHVYALPQSEAVRHAFRVASGLDSMVLGETQILGQMKDAVRTATEAGALGTYLNQLFQRTFAVAKEVRGTTEIGTQSVSMAAAAVRLAQRIFEKVSDQRVLFIGAGEMIELCATHFAAQGPRELVVANRTAERGQRLAERFNGRAMPLADLPTRMHEFDIIVSCTASTLPIIGLGAVERAVKARRHRPIFMVDLAVPRDIEPEVGKLKDVFLYTVDDLGAIVREGNASRQAAVAQAEAIIETRVQNFMQWLDTRSVVPVIRHMHTQADALRRAEVEKAQKLLARGDDPAAVLEALSQALTNKLIHGPTSALNRVNGADRDSLIDLMRGFYQHAPRSNDQSGH</sequence>
<evidence type="ECO:0000255" key="1">
    <source>
        <dbReference type="HAMAP-Rule" id="MF_00087"/>
    </source>
</evidence>
<organism>
    <name type="scientific">Burkholderia cenocepacia (strain ATCC BAA-245 / DSM 16553 / LMG 16656 / NCTC 13227 / J2315 / CF5610)</name>
    <name type="common">Burkholderia cepacia (strain J2315)</name>
    <dbReference type="NCBI Taxonomy" id="216591"/>
    <lineage>
        <taxon>Bacteria</taxon>
        <taxon>Pseudomonadati</taxon>
        <taxon>Pseudomonadota</taxon>
        <taxon>Betaproteobacteria</taxon>
        <taxon>Burkholderiales</taxon>
        <taxon>Burkholderiaceae</taxon>
        <taxon>Burkholderia</taxon>
        <taxon>Burkholderia cepacia complex</taxon>
    </lineage>
</organism>
<gene>
    <name evidence="1" type="primary">hemA</name>
    <name type="ordered locus">BceJ2315_03760</name>
    <name type="ORF">BCAL0375</name>
</gene>
<dbReference type="EC" id="1.2.1.70" evidence="1"/>
<dbReference type="EMBL" id="AM747720">
    <property type="protein sequence ID" value="CAR50685.1"/>
    <property type="molecule type" value="Genomic_DNA"/>
</dbReference>
<dbReference type="RefSeq" id="WP_006482047.1">
    <property type="nucleotide sequence ID" value="NC_011000.1"/>
</dbReference>
<dbReference type="SMR" id="B4E6U7"/>
<dbReference type="GeneID" id="56556946"/>
<dbReference type="KEGG" id="bcj:BCAL0375"/>
<dbReference type="eggNOG" id="COG0373">
    <property type="taxonomic scope" value="Bacteria"/>
</dbReference>
<dbReference type="HOGENOM" id="CLU_035113_2_2_4"/>
<dbReference type="BioCyc" id="BCEN216591:G1G1V-424-MONOMER"/>
<dbReference type="UniPathway" id="UPA00251">
    <property type="reaction ID" value="UER00316"/>
</dbReference>
<dbReference type="Proteomes" id="UP000001035">
    <property type="component" value="Chromosome 1"/>
</dbReference>
<dbReference type="GO" id="GO:0008883">
    <property type="term" value="F:glutamyl-tRNA reductase activity"/>
    <property type="evidence" value="ECO:0007669"/>
    <property type="project" value="UniProtKB-UniRule"/>
</dbReference>
<dbReference type="GO" id="GO:0050661">
    <property type="term" value="F:NADP binding"/>
    <property type="evidence" value="ECO:0007669"/>
    <property type="project" value="InterPro"/>
</dbReference>
<dbReference type="GO" id="GO:0019353">
    <property type="term" value="P:protoporphyrinogen IX biosynthetic process from glutamate"/>
    <property type="evidence" value="ECO:0007669"/>
    <property type="project" value="TreeGrafter"/>
</dbReference>
<dbReference type="CDD" id="cd05213">
    <property type="entry name" value="NAD_bind_Glutamyl_tRNA_reduct"/>
    <property type="match status" value="1"/>
</dbReference>
<dbReference type="FunFam" id="3.30.460.30:FF:000001">
    <property type="entry name" value="Glutamyl-tRNA reductase"/>
    <property type="match status" value="1"/>
</dbReference>
<dbReference type="FunFam" id="3.40.50.720:FF:000031">
    <property type="entry name" value="Glutamyl-tRNA reductase"/>
    <property type="match status" value="1"/>
</dbReference>
<dbReference type="Gene3D" id="3.30.460.30">
    <property type="entry name" value="Glutamyl-tRNA reductase, N-terminal domain"/>
    <property type="match status" value="1"/>
</dbReference>
<dbReference type="Gene3D" id="3.40.50.720">
    <property type="entry name" value="NAD(P)-binding Rossmann-like Domain"/>
    <property type="match status" value="1"/>
</dbReference>
<dbReference type="HAMAP" id="MF_00087">
    <property type="entry name" value="Glu_tRNA_reductase"/>
    <property type="match status" value="1"/>
</dbReference>
<dbReference type="InterPro" id="IPR000343">
    <property type="entry name" value="4pyrrol_synth_GluRdtase"/>
</dbReference>
<dbReference type="InterPro" id="IPR015896">
    <property type="entry name" value="4pyrrol_synth_GluRdtase_dimer"/>
</dbReference>
<dbReference type="InterPro" id="IPR015895">
    <property type="entry name" value="4pyrrol_synth_GluRdtase_N"/>
</dbReference>
<dbReference type="InterPro" id="IPR018214">
    <property type="entry name" value="GluRdtase_CS"/>
</dbReference>
<dbReference type="InterPro" id="IPR036453">
    <property type="entry name" value="GluRdtase_dimer_dom_sf"/>
</dbReference>
<dbReference type="InterPro" id="IPR036343">
    <property type="entry name" value="GluRdtase_N_sf"/>
</dbReference>
<dbReference type="InterPro" id="IPR036291">
    <property type="entry name" value="NAD(P)-bd_dom_sf"/>
</dbReference>
<dbReference type="InterPro" id="IPR006151">
    <property type="entry name" value="Shikm_DH/Glu-tRNA_Rdtase"/>
</dbReference>
<dbReference type="NCBIfam" id="TIGR01035">
    <property type="entry name" value="hemA"/>
    <property type="match status" value="1"/>
</dbReference>
<dbReference type="PANTHER" id="PTHR43013">
    <property type="entry name" value="GLUTAMYL-TRNA REDUCTASE"/>
    <property type="match status" value="1"/>
</dbReference>
<dbReference type="PANTHER" id="PTHR43013:SF1">
    <property type="entry name" value="GLUTAMYL-TRNA REDUCTASE"/>
    <property type="match status" value="1"/>
</dbReference>
<dbReference type="Pfam" id="PF00745">
    <property type="entry name" value="GlutR_dimer"/>
    <property type="match status" value="1"/>
</dbReference>
<dbReference type="Pfam" id="PF05201">
    <property type="entry name" value="GlutR_N"/>
    <property type="match status" value="1"/>
</dbReference>
<dbReference type="Pfam" id="PF01488">
    <property type="entry name" value="Shikimate_DH"/>
    <property type="match status" value="1"/>
</dbReference>
<dbReference type="PIRSF" id="PIRSF000445">
    <property type="entry name" value="4pyrrol_synth_GluRdtase"/>
    <property type="match status" value="1"/>
</dbReference>
<dbReference type="SUPFAM" id="SSF69742">
    <property type="entry name" value="Glutamyl tRNA-reductase catalytic, N-terminal domain"/>
    <property type="match status" value="1"/>
</dbReference>
<dbReference type="SUPFAM" id="SSF69075">
    <property type="entry name" value="Glutamyl tRNA-reductase dimerization domain"/>
    <property type="match status" value="1"/>
</dbReference>
<dbReference type="SUPFAM" id="SSF51735">
    <property type="entry name" value="NAD(P)-binding Rossmann-fold domains"/>
    <property type="match status" value="1"/>
</dbReference>
<dbReference type="PROSITE" id="PS00747">
    <property type="entry name" value="GLUTR"/>
    <property type="match status" value="1"/>
</dbReference>
<proteinExistence type="inferred from homology"/>
<protein>
    <recommendedName>
        <fullName evidence="1">Glutamyl-tRNA reductase</fullName>
        <shortName evidence="1">GluTR</shortName>
        <ecNumber evidence="1">1.2.1.70</ecNumber>
    </recommendedName>
</protein>
<comment type="function">
    <text evidence="1">Catalyzes the NADPH-dependent reduction of glutamyl-tRNA(Glu) to glutamate 1-semialdehyde (GSA).</text>
</comment>
<comment type="catalytic activity">
    <reaction evidence="1">
        <text>(S)-4-amino-5-oxopentanoate + tRNA(Glu) + NADP(+) = L-glutamyl-tRNA(Glu) + NADPH + H(+)</text>
        <dbReference type="Rhea" id="RHEA:12344"/>
        <dbReference type="Rhea" id="RHEA-COMP:9663"/>
        <dbReference type="Rhea" id="RHEA-COMP:9680"/>
        <dbReference type="ChEBI" id="CHEBI:15378"/>
        <dbReference type="ChEBI" id="CHEBI:57501"/>
        <dbReference type="ChEBI" id="CHEBI:57783"/>
        <dbReference type="ChEBI" id="CHEBI:58349"/>
        <dbReference type="ChEBI" id="CHEBI:78442"/>
        <dbReference type="ChEBI" id="CHEBI:78520"/>
        <dbReference type="EC" id="1.2.1.70"/>
    </reaction>
</comment>
<comment type="pathway">
    <text evidence="1">Porphyrin-containing compound metabolism; protoporphyrin-IX biosynthesis; 5-aminolevulinate from L-glutamyl-tRNA(Glu): step 1/2.</text>
</comment>
<comment type="subunit">
    <text evidence="1">Homodimer.</text>
</comment>
<comment type="domain">
    <text evidence="1">Possesses an unusual extended V-shaped dimeric structure with each monomer consisting of three distinct domains arranged along a curved 'spinal' alpha-helix. The N-terminal catalytic domain specifically recognizes the glutamate moiety of the substrate. The second domain is the NADPH-binding domain, and the third C-terminal domain is responsible for dimerization.</text>
</comment>
<comment type="miscellaneous">
    <text evidence="1">During catalysis, the active site Cys acts as a nucleophile attacking the alpha-carbonyl group of tRNA-bound glutamate with the formation of a thioester intermediate between enzyme and glutamate, and the concomitant release of tRNA(Glu). The thioester intermediate is finally reduced by direct hydride transfer from NADPH, to form the product GSA.</text>
</comment>
<comment type="similarity">
    <text evidence="1">Belongs to the glutamyl-tRNA reductase family.</text>
</comment>
<feature type="chain" id="PRO_1000093117" description="Glutamyl-tRNA reductase">
    <location>
        <begin position="1"/>
        <end position="432"/>
    </location>
</feature>
<feature type="active site" description="Nucleophile" evidence="1">
    <location>
        <position position="56"/>
    </location>
</feature>
<feature type="binding site" evidence="1">
    <location>
        <begin position="55"/>
        <end position="58"/>
    </location>
    <ligand>
        <name>substrate</name>
    </ligand>
</feature>
<feature type="binding site" evidence="1">
    <location>
        <position position="114"/>
    </location>
    <ligand>
        <name>substrate</name>
    </ligand>
</feature>
<feature type="binding site" evidence="1">
    <location>
        <begin position="119"/>
        <end position="121"/>
    </location>
    <ligand>
        <name>substrate</name>
    </ligand>
</feature>
<feature type="binding site" evidence="1">
    <location>
        <position position="125"/>
    </location>
    <ligand>
        <name>substrate</name>
    </ligand>
</feature>
<feature type="binding site" evidence="1">
    <location>
        <begin position="194"/>
        <end position="199"/>
    </location>
    <ligand>
        <name>NADP(+)</name>
        <dbReference type="ChEBI" id="CHEBI:58349"/>
    </ligand>
</feature>
<feature type="site" description="Important for activity" evidence="1">
    <location>
        <position position="104"/>
    </location>
</feature>
<keyword id="KW-0521">NADP</keyword>
<keyword id="KW-0560">Oxidoreductase</keyword>
<keyword id="KW-0627">Porphyrin biosynthesis</keyword>
<accession>B4E6U7</accession>